<organism>
    <name type="scientific">Aspergillus clavatus (strain ATCC 1007 / CBS 513.65 / DSM 816 / NCTC 3887 / NRRL 1 / QM 1276 / 107)</name>
    <dbReference type="NCBI Taxonomy" id="344612"/>
    <lineage>
        <taxon>Eukaryota</taxon>
        <taxon>Fungi</taxon>
        <taxon>Dikarya</taxon>
        <taxon>Ascomycota</taxon>
        <taxon>Pezizomycotina</taxon>
        <taxon>Eurotiomycetes</taxon>
        <taxon>Eurotiomycetidae</taxon>
        <taxon>Eurotiales</taxon>
        <taxon>Aspergillaceae</taxon>
        <taxon>Aspergillus</taxon>
        <taxon>Aspergillus subgen. Fumigati</taxon>
    </lineage>
</organism>
<gene>
    <name type="primary">xlnC</name>
    <name type="ORF">ACLA_048770</name>
</gene>
<accession>A1CHQ0</accession>
<reference key="1">
    <citation type="journal article" date="2008" name="PLoS Genet.">
        <title>Genomic islands in the pathogenic filamentous fungus Aspergillus fumigatus.</title>
        <authorList>
            <person name="Fedorova N.D."/>
            <person name="Khaldi N."/>
            <person name="Joardar V.S."/>
            <person name="Maiti R."/>
            <person name="Amedeo P."/>
            <person name="Anderson M.J."/>
            <person name="Crabtree J."/>
            <person name="Silva J.C."/>
            <person name="Badger J.H."/>
            <person name="Albarraq A."/>
            <person name="Angiuoli S."/>
            <person name="Bussey H."/>
            <person name="Bowyer P."/>
            <person name="Cotty P.J."/>
            <person name="Dyer P.S."/>
            <person name="Egan A."/>
            <person name="Galens K."/>
            <person name="Fraser-Liggett C.M."/>
            <person name="Haas B.J."/>
            <person name="Inman J.M."/>
            <person name="Kent R."/>
            <person name="Lemieux S."/>
            <person name="Malavazi I."/>
            <person name="Orvis J."/>
            <person name="Roemer T."/>
            <person name="Ronning C.M."/>
            <person name="Sundaram J.P."/>
            <person name="Sutton G."/>
            <person name="Turner G."/>
            <person name="Venter J.C."/>
            <person name="White O.R."/>
            <person name="Whitty B.R."/>
            <person name="Youngman P."/>
            <person name="Wolfe K.H."/>
            <person name="Goldman G.H."/>
            <person name="Wortman J.R."/>
            <person name="Jiang B."/>
            <person name="Denning D.W."/>
            <person name="Nierman W.C."/>
        </authorList>
    </citation>
    <scope>NUCLEOTIDE SEQUENCE [LARGE SCALE GENOMIC DNA]</scope>
    <source>
        <strain>ATCC 1007 / CBS 513.65 / DSM 816 / NCTC 3887 / NRRL 1 / QM 1276 / 107</strain>
    </source>
</reference>
<sequence>MVVLSKIFSCALFLSLGSAAAIDIRQTSSINNAFKSHGKKYFGTCGDQNTLSIPQNSAIIKADFGALTPENSMKWDATEPSRGKFNFAGADHLVNYAKQNGKLVRGHTLVWYSQLPAWVKAISDKQTLTSVLKNHITTVMSRYKGQVYAWDVVNEIFEENGSLRNSVFYRVLGEDFVRIAFETARAVDPHAKLYINDYNLDSANYGKTQAMVKHVKKWLAAGIPIDGIGSQSHLSQALSALASTGVSEIAITELDIKGANPSEYVAVTKACLEVKKCIGITVWGVSDKNSWRKDNSPLLFDRNYNPKPAYNAIIAAL</sequence>
<evidence type="ECO:0000250" key="1"/>
<evidence type="ECO:0000255" key="2"/>
<evidence type="ECO:0000255" key="3">
    <source>
        <dbReference type="PROSITE-ProRule" id="PRU01096"/>
    </source>
</evidence>
<evidence type="ECO:0000305" key="4"/>
<keyword id="KW-0119">Carbohydrate metabolism</keyword>
<keyword id="KW-1015">Disulfide bond</keyword>
<keyword id="KW-0326">Glycosidase</keyword>
<keyword id="KW-0378">Hydrolase</keyword>
<keyword id="KW-0624">Polysaccharide degradation</keyword>
<keyword id="KW-1185">Reference proteome</keyword>
<keyword id="KW-0964">Secreted</keyword>
<keyword id="KW-0732">Signal</keyword>
<keyword id="KW-0858">Xylan degradation</keyword>
<feature type="signal peptide" evidence="2">
    <location>
        <begin position="1"/>
        <end position="21"/>
    </location>
</feature>
<feature type="chain" id="PRO_0000393185" description="Probable endo-1,4-beta-xylanase C">
    <location>
        <begin position="22"/>
        <end position="317"/>
    </location>
</feature>
<feature type="domain" description="GH10" evidence="3">
    <location>
        <begin position="47"/>
        <end position="316"/>
    </location>
</feature>
<feature type="active site" description="Proton donor" evidence="1">
    <location>
        <position position="155"/>
    </location>
</feature>
<feature type="active site" description="Nucleophile" evidence="1">
    <location>
        <position position="253"/>
    </location>
</feature>
<feature type="disulfide bond" evidence="1">
    <location>
        <begin position="271"/>
        <end position="277"/>
    </location>
</feature>
<proteinExistence type="evidence at transcript level"/>
<protein>
    <recommendedName>
        <fullName>Probable endo-1,4-beta-xylanase C</fullName>
        <shortName>Xylanase C</shortName>
        <ecNumber>3.2.1.8</ecNumber>
    </recommendedName>
    <alternativeName>
        <fullName>1,4-beta-D-xylan xylanohydrolase C</fullName>
    </alternativeName>
</protein>
<dbReference type="EC" id="3.2.1.8"/>
<dbReference type="EMBL" id="DS027054">
    <property type="protein sequence ID" value="EAW10405.1"/>
    <property type="molecule type" value="Genomic_DNA"/>
</dbReference>
<dbReference type="RefSeq" id="XP_001271831.1">
    <property type="nucleotide sequence ID" value="XM_001271830.1"/>
</dbReference>
<dbReference type="SMR" id="A1CHQ0"/>
<dbReference type="STRING" id="344612.A1CHQ0"/>
<dbReference type="EnsemblFungi" id="EAW10405">
    <property type="protein sequence ID" value="EAW10405"/>
    <property type="gene ID" value="ACLA_048770"/>
</dbReference>
<dbReference type="GeneID" id="4704046"/>
<dbReference type="KEGG" id="act:ACLA_048770"/>
<dbReference type="VEuPathDB" id="FungiDB:ACLA_048770"/>
<dbReference type="eggNOG" id="ENOG502QSCW">
    <property type="taxonomic scope" value="Eukaryota"/>
</dbReference>
<dbReference type="HOGENOM" id="CLU_020161_2_0_1"/>
<dbReference type="OMA" id="PENQMKW"/>
<dbReference type="OrthoDB" id="3055998at2759"/>
<dbReference type="UniPathway" id="UPA00114"/>
<dbReference type="Proteomes" id="UP000006701">
    <property type="component" value="Unassembled WGS sequence"/>
</dbReference>
<dbReference type="GO" id="GO:0005576">
    <property type="term" value="C:extracellular region"/>
    <property type="evidence" value="ECO:0000250"/>
    <property type="project" value="UniProtKB"/>
</dbReference>
<dbReference type="GO" id="GO:0031176">
    <property type="term" value="F:endo-1,4-beta-xylanase activity"/>
    <property type="evidence" value="ECO:0000250"/>
    <property type="project" value="UniProtKB"/>
</dbReference>
<dbReference type="GO" id="GO:0045493">
    <property type="term" value="P:xylan catabolic process"/>
    <property type="evidence" value="ECO:0000250"/>
    <property type="project" value="UniProtKB"/>
</dbReference>
<dbReference type="FunFam" id="3.20.20.80:FF:000094">
    <property type="entry name" value="Endo-1,4-beta-xylanase"/>
    <property type="match status" value="1"/>
</dbReference>
<dbReference type="Gene3D" id="3.20.20.80">
    <property type="entry name" value="Glycosidases"/>
    <property type="match status" value="1"/>
</dbReference>
<dbReference type="InterPro" id="IPR044846">
    <property type="entry name" value="GH10"/>
</dbReference>
<dbReference type="InterPro" id="IPR001000">
    <property type="entry name" value="GH10_dom"/>
</dbReference>
<dbReference type="InterPro" id="IPR017853">
    <property type="entry name" value="Glycoside_hydrolase_SF"/>
</dbReference>
<dbReference type="PANTHER" id="PTHR31490:SF76">
    <property type="entry name" value="ENDO-1,4-BETA-XYLANASE C"/>
    <property type="match status" value="1"/>
</dbReference>
<dbReference type="PANTHER" id="PTHR31490">
    <property type="entry name" value="GLYCOSYL HYDROLASE"/>
    <property type="match status" value="1"/>
</dbReference>
<dbReference type="Pfam" id="PF00331">
    <property type="entry name" value="Glyco_hydro_10"/>
    <property type="match status" value="1"/>
</dbReference>
<dbReference type="PRINTS" id="PR00134">
    <property type="entry name" value="GLHYDRLASE10"/>
</dbReference>
<dbReference type="SMART" id="SM00633">
    <property type="entry name" value="Glyco_10"/>
    <property type="match status" value="1"/>
</dbReference>
<dbReference type="SUPFAM" id="SSF51445">
    <property type="entry name" value="(Trans)glycosidases"/>
    <property type="match status" value="1"/>
</dbReference>
<dbReference type="PROSITE" id="PS51760">
    <property type="entry name" value="GH10_2"/>
    <property type="match status" value="1"/>
</dbReference>
<name>XYNC_ASPCL</name>
<comment type="function">
    <text evidence="1">Endo-1,4-beta-xylanase involved in the hydrolysis of xylan, a major structural heterogeneous polysaccharide found in plant biomass representing the second most abundant polysaccharide in the biosphere, after cellulose.</text>
</comment>
<comment type="catalytic activity">
    <reaction>
        <text>Endohydrolysis of (1-&gt;4)-beta-D-xylosidic linkages in xylans.</text>
        <dbReference type="EC" id="3.2.1.8"/>
    </reaction>
</comment>
<comment type="pathway">
    <text>Glycan degradation; xylan degradation.</text>
</comment>
<comment type="subcellular location">
    <subcellularLocation>
        <location evidence="1">Secreted</location>
    </subcellularLocation>
</comment>
<comment type="induction">
    <text>Expressed in presence of xylan and repressed by glucose.</text>
</comment>
<comment type="similarity">
    <text evidence="4">Belongs to the glycosyl hydrolase 10 (cellulase F) family.</text>
</comment>